<gene>
    <name evidence="1" type="primary">rplU</name>
    <name type="ordered locus">stu0417</name>
</gene>
<name>RL21_STRT2</name>
<keyword id="KW-1185">Reference proteome</keyword>
<keyword id="KW-0687">Ribonucleoprotein</keyword>
<keyword id="KW-0689">Ribosomal protein</keyword>
<keyword id="KW-0694">RNA-binding</keyword>
<keyword id="KW-0699">rRNA-binding</keyword>
<reference key="1">
    <citation type="journal article" date="2004" name="Nat. Biotechnol.">
        <title>Complete sequence and comparative genome analysis of the dairy bacterium Streptococcus thermophilus.</title>
        <authorList>
            <person name="Bolotin A."/>
            <person name="Quinquis B."/>
            <person name="Renault P."/>
            <person name="Sorokin A."/>
            <person name="Ehrlich S.D."/>
            <person name="Kulakauskas S."/>
            <person name="Lapidus A."/>
            <person name="Goltsman E."/>
            <person name="Mazur M."/>
            <person name="Pusch G.D."/>
            <person name="Fonstein M."/>
            <person name="Overbeek R."/>
            <person name="Kyprides N."/>
            <person name="Purnelle B."/>
            <person name="Prozzi D."/>
            <person name="Ngui K."/>
            <person name="Masuy D."/>
            <person name="Hancy F."/>
            <person name="Burteau S."/>
            <person name="Boutry M."/>
            <person name="Delcour J."/>
            <person name="Goffeau A."/>
            <person name="Hols P."/>
        </authorList>
    </citation>
    <scope>NUCLEOTIDE SEQUENCE [LARGE SCALE GENOMIC DNA]</scope>
    <source>
        <strain>ATCC BAA-250 / LMG 18311</strain>
    </source>
</reference>
<comment type="function">
    <text evidence="1">This protein binds to 23S rRNA in the presence of protein L20.</text>
</comment>
<comment type="subunit">
    <text evidence="1">Part of the 50S ribosomal subunit. Contacts protein L20.</text>
</comment>
<comment type="similarity">
    <text evidence="1">Belongs to the bacterial ribosomal protein bL21 family.</text>
</comment>
<comment type="sequence caution" evidence="2">
    <conflict type="erroneous initiation">
        <sequence resource="EMBL-CDS" id="AAV60131"/>
    </conflict>
</comment>
<evidence type="ECO:0000255" key="1">
    <source>
        <dbReference type="HAMAP-Rule" id="MF_01363"/>
    </source>
</evidence>
<evidence type="ECO:0000305" key="2"/>
<sequence length="104" mass="11184">MSTYAIIKTGGKQVKVEVGQAIYVEKINAEAGSEVTFNEVVLVGGDKTVVGTPVVEGATVVGTIEKQGKQKKVVTFKYKPKKGSHRKQGHRQPYTKVVINAINA</sequence>
<feature type="chain" id="PRO_0000269402" description="Large ribosomal subunit protein bL21">
    <location>
        <begin position="1"/>
        <end position="104"/>
    </location>
</feature>
<accession>Q5M5P7</accession>
<dbReference type="EMBL" id="CP000023">
    <property type="protein sequence ID" value="AAV60131.1"/>
    <property type="status" value="ALT_INIT"/>
    <property type="molecule type" value="Genomic_DNA"/>
</dbReference>
<dbReference type="RefSeq" id="WP_002885597.1">
    <property type="nucleotide sequence ID" value="NC_006448.1"/>
</dbReference>
<dbReference type="SMR" id="Q5M5P7"/>
<dbReference type="STRING" id="264199.stu0417"/>
<dbReference type="GeneID" id="93791586"/>
<dbReference type="KEGG" id="stl:stu0417"/>
<dbReference type="eggNOG" id="COG0261">
    <property type="taxonomic scope" value="Bacteria"/>
</dbReference>
<dbReference type="HOGENOM" id="CLU_061463_3_1_9"/>
<dbReference type="Proteomes" id="UP000001170">
    <property type="component" value="Chromosome"/>
</dbReference>
<dbReference type="GO" id="GO:0005737">
    <property type="term" value="C:cytoplasm"/>
    <property type="evidence" value="ECO:0007669"/>
    <property type="project" value="UniProtKB-ARBA"/>
</dbReference>
<dbReference type="GO" id="GO:1990904">
    <property type="term" value="C:ribonucleoprotein complex"/>
    <property type="evidence" value="ECO:0007669"/>
    <property type="project" value="UniProtKB-KW"/>
</dbReference>
<dbReference type="GO" id="GO:0005840">
    <property type="term" value="C:ribosome"/>
    <property type="evidence" value="ECO:0007669"/>
    <property type="project" value="UniProtKB-KW"/>
</dbReference>
<dbReference type="GO" id="GO:0019843">
    <property type="term" value="F:rRNA binding"/>
    <property type="evidence" value="ECO:0007669"/>
    <property type="project" value="UniProtKB-UniRule"/>
</dbReference>
<dbReference type="GO" id="GO:0003735">
    <property type="term" value="F:structural constituent of ribosome"/>
    <property type="evidence" value="ECO:0007669"/>
    <property type="project" value="InterPro"/>
</dbReference>
<dbReference type="GO" id="GO:0006412">
    <property type="term" value="P:translation"/>
    <property type="evidence" value="ECO:0007669"/>
    <property type="project" value="UniProtKB-UniRule"/>
</dbReference>
<dbReference type="HAMAP" id="MF_01363">
    <property type="entry name" value="Ribosomal_bL21"/>
    <property type="match status" value="1"/>
</dbReference>
<dbReference type="InterPro" id="IPR028909">
    <property type="entry name" value="bL21-like"/>
</dbReference>
<dbReference type="InterPro" id="IPR036164">
    <property type="entry name" value="bL21-like_sf"/>
</dbReference>
<dbReference type="InterPro" id="IPR001787">
    <property type="entry name" value="Ribosomal_bL21"/>
</dbReference>
<dbReference type="InterPro" id="IPR018258">
    <property type="entry name" value="Ribosomal_bL21_CS"/>
</dbReference>
<dbReference type="NCBIfam" id="TIGR00061">
    <property type="entry name" value="L21"/>
    <property type="match status" value="1"/>
</dbReference>
<dbReference type="PANTHER" id="PTHR21349">
    <property type="entry name" value="50S RIBOSOMAL PROTEIN L21"/>
    <property type="match status" value="1"/>
</dbReference>
<dbReference type="PANTHER" id="PTHR21349:SF0">
    <property type="entry name" value="LARGE RIBOSOMAL SUBUNIT PROTEIN BL21M"/>
    <property type="match status" value="1"/>
</dbReference>
<dbReference type="Pfam" id="PF00829">
    <property type="entry name" value="Ribosomal_L21p"/>
    <property type="match status" value="1"/>
</dbReference>
<dbReference type="SUPFAM" id="SSF141091">
    <property type="entry name" value="L21p-like"/>
    <property type="match status" value="1"/>
</dbReference>
<dbReference type="PROSITE" id="PS01169">
    <property type="entry name" value="RIBOSOMAL_L21"/>
    <property type="match status" value="1"/>
</dbReference>
<organism>
    <name type="scientific">Streptococcus thermophilus (strain ATCC BAA-250 / LMG 18311)</name>
    <dbReference type="NCBI Taxonomy" id="264199"/>
    <lineage>
        <taxon>Bacteria</taxon>
        <taxon>Bacillati</taxon>
        <taxon>Bacillota</taxon>
        <taxon>Bacilli</taxon>
        <taxon>Lactobacillales</taxon>
        <taxon>Streptococcaceae</taxon>
        <taxon>Streptococcus</taxon>
    </lineage>
</organism>
<proteinExistence type="inferred from homology"/>
<protein>
    <recommendedName>
        <fullName evidence="1">Large ribosomal subunit protein bL21</fullName>
    </recommendedName>
    <alternativeName>
        <fullName evidence="2">50S ribosomal protein L21</fullName>
    </alternativeName>
</protein>